<organism>
    <name type="scientific">Brucella melitensis biotype 1 (strain ATCC 23456 / CCUG 17765 / NCTC 10094 / 16M)</name>
    <dbReference type="NCBI Taxonomy" id="224914"/>
    <lineage>
        <taxon>Bacteria</taxon>
        <taxon>Pseudomonadati</taxon>
        <taxon>Pseudomonadota</taxon>
        <taxon>Alphaproteobacteria</taxon>
        <taxon>Hyphomicrobiales</taxon>
        <taxon>Brucellaceae</taxon>
        <taxon>Brucella/Ochrobactrum group</taxon>
        <taxon>Brucella</taxon>
    </lineage>
</organism>
<gene>
    <name evidence="1" type="primary">rpoB</name>
    <name type="ordered locus">BMEI0749</name>
</gene>
<feature type="chain" id="PRO_0000047870" description="DNA-directed RNA polymerase subunit beta">
    <location>
        <begin position="1"/>
        <end position="1377"/>
    </location>
</feature>
<accession>Q8YHP8</accession>
<proteinExistence type="inferred from homology"/>
<sequence>MAQTHSFNGRKRVRKFFGKIPEVAEMPNLIEVQKASYDQFLMVEEPSGGRPDEGLQAVFKSVFPIQDFSGASMLEFVRYEFDPPKFDVDECRQRDLTYSAPLKVTLRLIVFDIDEDTGAKSIKDIKEQDVYMGDMPLMTDNGTFIVNGTERVIVSQMHRSPGVFFDHDKGKTHSSGKLLFAARVIPYRGSWLDIEFDSKDIVYARIDRRRKLPATTLLMALGMDGEEILSTFYKTVTYTRDGDNWRIPYSAERFKGMKIISDLVDADTGEVVLEAGKKLTARAAKQLAEKGLKAIKATEDDLFGSYLAEDVVNYATGEIYLEAGDEIDEKVLKTLIDTGETEINVLDIDHVNIGAYIRNTLAVDKNESRQEALFDIYRVMRPGEPPTMDSAEAMFHSLFFDSERYDLSAVGRVKMNMRLDLDAEDTVRVLRKEDILAVVKMLVELRDGRGEIDDIDNLGNRRVRSVGELMENQYRVGLLRMERAIKERMSSIEIDTVMPQDLINAKPAAAAVREFFGSSQLSQFMDQTNPLSEITHKRRLSALGPGGLTRERAGFEVRDVHPTHYGRICPIETPEGPNIGLINSLATFARVNKYGFIESPYRKVVDGKVTNDVVYLSAMEEAKHSVAQANVELDEQGGFVDEFVICRHAGEVMMAPRENVDLMDVSPKQLVSVAAALIPFLENDDANRALMGSNMQRQAVPLVRAEAPFVGTGMEPIVARDSGAAIAARRGGIVDQVDATRIVIRATEELDPSKSGVDIYRLQKFQRSNQSTCINQRPLVRVGDRIHKGDIIADGPSTDLGDLALGRNVLVAFMPWNGYNYEDSILLSEKIVSDDVFTSIHIEEFEVAARDTKLGPEEITRDIPNVSEEALKNLDEAGIVYIGAEVHPGDILVGKITPKGESPMTPEEKLLRAIFGEKASDVRDTSMRMPPGTYGTVVEVRVFNRHGVEKDERAMAIEREEIERLAKDRDDEQAILDRNVYGRLADMIDGKVAAAGPKGFKKGTTITRELMTEYPRSQWWQFAVEDEKLQGELEALRSQYDDSKKLLEARFMDKVEKVQRGDEMPPGVMKMVKVFVAVKRKIQPGDKMAGRHGNKGVVSRILPVEDMPFLEDGTHADIVLNPLGVPSRMNVGQILETHLGWACAGMGKKIGELLDVYRKTANIEPLRQTLEHIYPDNDRNEPVRSYDDDAILMLANQVKRGVSIATPVFDGAVEADINAMLTDAGLATSGQSTLYDGRTGEPFDRQVTMGYIYMLKLHHLVDDKIHARSIGPYSLVTQQPLGGKAQFGGQRFGEMEVWALEAYGAAYTLQEMLTVKSDDVAGRTKVYEAIVRGDDTFEAGIPESFNVLVKEMRSLGLNVELDDTREAEQPALPDAAE</sequence>
<name>RPOB_BRUME</name>
<evidence type="ECO:0000255" key="1">
    <source>
        <dbReference type="HAMAP-Rule" id="MF_01321"/>
    </source>
</evidence>
<reference key="1">
    <citation type="journal article" date="2002" name="Proc. Natl. Acad. Sci. U.S.A.">
        <title>The genome sequence of the facultative intracellular pathogen Brucella melitensis.</title>
        <authorList>
            <person name="DelVecchio V.G."/>
            <person name="Kapatral V."/>
            <person name="Redkar R.J."/>
            <person name="Patra G."/>
            <person name="Mujer C."/>
            <person name="Los T."/>
            <person name="Ivanova N."/>
            <person name="Anderson I."/>
            <person name="Bhattacharyya A."/>
            <person name="Lykidis A."/>
            <person name="Reznik G."/>
            <person name="Jablonski L."/>
            <person name="Larsen N."/>
            <person name="D'Souza M."/>
            <person name="Bernal A."/>
            <person name="Mazur M."/>
            <person name="Goltsman E."/>
            <person name="Selkov E."/>
            <person name="Elzer P.H."/>
            <person name="Hagius S."/>
            <person name="O'Callaghan D."/>
            <person name="Letesson J.-J."/>
            <person name="Haselkorn R."/>
            <person name="Kyrpides N.C."/>
            <person name="Overbeek R."/>
        </authorList>
    </citation>
    <scope>NUCLEOTIDE SEQUENCE [LARGE SCALE GENOMIC DNA]</scope>
    <source>
        <strain>ATCC 23456 / CCUG 17765 / NCTC 10094 / 16M</strain>
    </source>
</reference>
<comment type="function">
    <text evidence="1">DNA-dependent RNA polymerase catalyzes the transcription of DNA into RNA using the four ribonucleoside triphosphates as substrates.</text>
</comment>
<comment type="catalytic activity">
    <reaction evidence="1">
        <text>RNA(n) + a ribonucleoside 5'-triphosphate = RNA(n+1) + diphosphate</text>
        <dbReference type="Rhea" id="RHEA:21248"/>
        <dbReference type="Rhea" id="RHEA-COMP:14527"/>
        <dbReference type="Rhea" id="RHEA-COMP:17342"/>
        <dbReference type="ChEBI" id="CHEBI:33019"/>
        <dbReference type="ChEBI" id="CHEBI:61557"/>
        <dbReference type="ChEBI" id="CHEBI:140395"/>
        <dbReference type="EC" id="2.7.7.6"/>
    </reaction>
</comment>
<comment type="subunit">
    <text evidence="1">The RNAP catalytic core consists of 2 alpha, 1 beta, 1 beta' and 1 omega subunit. When a sigma factor is associated with the core the holoenzyme is formed, which can initiate transcription.</text>
</comment>
<comment type="similarity">
    <text evidence="1">Belongs to the RNA polymerase beta chain family.</text>
</comment>
<dbReference type="EC" id="2.7.7.6" evidence="1"/>
<dbReference type="EMBL" id="AE008917">
    <property type="protein sequence ID" value="AAL51930.1"/>
    <property type="molecule type" value="Genomic_DNA"/>
</dbReference>
<dbReference type="PIR" id="AG3345">
    <property type="entry name" value="AG3345"/>
</dbReference>
<dbReference type="RefSeq" id="WP_002966855.1">
    <property type="nucleotide sequence ID" value="NZ_GG703780.1"/>
</dbReference>
<dbReference type="SMR" id="Q8YHP8"/>
<dbReference type="GeneID" id="97533517"/>
<dbReference type="KEGG" id="bme:BMEI0749"/>
<dbReference type="KEGG" id="bmel:DK63_673"/>
<dbReference type="PATRIC" id="fig|224914.52.peg.704"/>
<dbReference type="eggNOG" id="COG0085">
    <property type="taxonomic scope" value="Bacteria"/>
</dbReference>
<dbReference type="PhylomeDB" id="Q8YHP8"/>
<dbReference type="Proteomes" id="UP000000419">
    <property type="component" value="Chromosome I"/>
</dbReference>
<dbReference type="GO" id="GO:0000428">
    <property type="term" value="C:DNA-directed RNA polymerase complex"/>
    <property type="evidence" value="ECO:0007669"/>
    <property type="project" value="UniProtKB-KW"/>
</dbReference>
<dbReference type="GO" id="GO:0003677">
    <property type="term" value="F:DNA binding"/>
    <property type="evidence" value="ECO:0007669"/>
    <property type="project" value="UniProtKB-UniRule"/>
</dbReference>
<dbReference type="GO" id="GO:0003899">
    <property type="term" value="F:DNA-directed RNA polymerase activity"/>
    <property type="evidence" value="ECO:0007669"/>
    <property type="project" value="UniProtKB-UniRule"/>
</dbReference>
<dbReference type="GO" id="GO:0032549">
    <property type="term" value="F:ribonucleoside binding"/>
    <property type="evidence" value="ECO:0007669"/>
    <property type="project" value="InterPro"/>
</dbReference>
<dbReference type="GO" id="GO:0006351">
    <property type="term" value="P:DNA-templated transcription"/>
    <property type="evidence" value="ECO:0007669"/>
    <property type="project" value="UniProtKB-UniRule"/>
</dbReference>
<dbReference type="CDD" id="cd00653">
    <property type="entry name" value="RNA_pol_B_RPB2"/>
    <property type="match status" value="1"/>
</dbReference>
<dbReference type="FunFam" id="2.40.50.100:FF:000006">
    <property type="entry name" value="DNA-directed RNA polymerase subunit beta"/>
    <property type="match status" value="1"/>
</dbReference>
<dbReference type="FunFam" id="3.90.1800.10:FF:000001">
    <property type="entry name" value="DNA-directed RNA polymerase subunit beta"/>
    <property type="match status" value="1"/>
</dbReference>
<dbReference type="Gene3D" id="2.40.50.100">
    <property type="match status" value="1"/>
</dbReference>
<dbReference type="Gene3D" id="2.40.50.150">
    <property type="match status" value="1"/>
</dbReference>
<dbReference type="Gene3D" id="3.90.1100.10">
    <property type="match status" value="2"/>
</dbReference>
<dbReference type="Gene3D" id="2.30.150.10">
    <property type="entry name" value="DNA-directed RNA polymerase, beta subunit, external 1 domain"/>
    <property type="match status" value="1"/>
</dbReference>
<dbReference type="Gene3D" id="2.40.270.10">
    <property type="entry name" value="DNA-directed RNA polymerase, subunit 2, domain 6"/>
    <property type="match status" value="2"/>
</dbReference>
<dbReference type="Gene3D" id="3.90.1800.10">
    <property type="entry name" value="RNA polymerase alpha subunit dimerisation domain"/>
    <property type="match status" value="1"/>
</dbReference>
<dbReference type="Gene3D" id="3.90.1110.10">
    <property type="entry name" value="RNA polymerase Rpb2, domain 2"/>
    <property type="match status" value="2"/>
</dbReference>
<dbReference type="HAMAP" id="MF_01321">
    <property type="entry name" value="RNApol_bact_RpoB"/>
    <property type="match status" value="1"/>
</dbReference>
<dbReference type="InterPro" id="IPR042107">
    <property type="entry name" value="DNA-dir_RNA_pol_bsu_ext_1_sf"/>
</dbReference>
<dbReference type="InterPro" id="IPR019462">
    <property type="entry name" value="DNA-dir_RNA_pol_bsu_external_1"/>
</dbReference>
<dbReference type="InterPro" id="IPR015712">
    <property type="entry name" value="DNA-dir_RNA_pol_su2"/>
</dbReference>
<dbReference type="InterPro" id="IPR007120">
    <property type="entry name" value="DNA-dir_RNAP_su2_dom"/>
</dbReference>
<dbReference type="InterPro" id="IPR037033">
    <property type="entry name" value="DNA-dir_RNAP_su2_hyb_sf"/>
</dbReference>
<dbReference type="InterPro" id="IPR010243">
    <property type="entry name" value="RNA_pol_bsu_bac"/>
</dbReference>
<dbReference type="InterPro" id="IPR007121">
    <property type="entry name" value="RNA_pol_bsu_CS"/>
</dbReference>
<dbReference type="InterPro" id="IPR007644">
    <property type="entry name" value="RNA_pol_bsu_protrusion"/>
</dbReference>
<dbReference type="InterPro" id="IPR007642">
    <property type="entry name" value="RNA_pol_Rpb2_2"/>
</dbReference>
<dbReference type="InterPro" id="IPR037034">
    <property type="entry name" value="RNA_pol_Rpb2_2_sf"/>
</dbReference>
<dbReference type="InterPro" id="IPR007645">
    <property type="entry name" value="RNA_pol_Rpb2_3"/>
</dbReference>
<dbReference type="InterPro" id="IPR007641">
    <property type="entry name" value="RNA_pol_Rpb2_7"/>
</dbReference>
<dbReference type="InterPro" id="IPR014724">
    <property type="entry name" value="RNA_pol_RPB2_OB-fold"/>
</dbReference>
<dbReference type="NCBIfam" id="NF001616">
    <property type="entry name" value="PRK00405.1"/>
    <property type="match status" value="1"/>
</dbReference>
<dbReference type="NCBIfam" id="TIGR02013">
    <property type="entry name" value="rpoB"/>
    <property type="match status" value="1"/>
</dbReference>
<dbReference type="PANTHER" id="PTHR20856">
    <property type="entry name" value="DNA-DIRECTED RNA POLYMERASE I SUBUNIT 2"/>
    <property type="match status" value="1"/>
</dbReference>
<dbReference type="Pfam" id="PF04563">
    <property type="entry name" value="RNA_pol_Rpb2_1"/>
    <property type="match status" value="1"/>
</dbReference>
<dbReference type="Pfam" id="PF04561">
    <property type="entry name" value="RNA_pol_Rpb2_2"/>
    <property type="match status" value="2"/>
</dbReference>
<dbReference type="Pfam" id="PF04565">
    <property type="entry name" value="RNA_pol_Rpb2_3"/>
    <property type="match status" value="1"/>
</dbReference>
<dbReference type="Pfam" id="PF10385">
    <property type="entry name" value="RNA_pol_Rpb2_45"/>
    <property type="match status" value="1"/>
</dbReference>
<dbReference type="Pfam" id="PF00562">
    <property type="entry name" value="RNA_pol_Rpb2_6"/>
    <property type="match status" value="1"/>
</dbReference>
<dbReference type="Pfam" id="PF04560">
    <property type="entry name" value="RNA_pol_Rpb2_7"/>
    <property type="match status" value="1"/>
</dbReference>
<dbReference type="SUPFAM" id="SSF64484">
    <property type="entry name" value="beta and beta-prime subunits of DNA dependent RNA-polymerase"/>
    <property type="match status" value="1"/>
</dbReference>
<dbReference type="PROSITE" id="PS01166">
    <property type="entry name" value="RNA_POL_BETA"/>
    <property type="match status" value="1"/>
</dbReference>
<protein>
    <recommendedName>
        <fullName evidence="1">DNA-directed RNA polymerase subunit beta</fullName>
        <shortName evidence="1">RNAP subunit beta</shortName>
        <ecNumber evidence="1">2.7.7.6</ecNumber>
    </recommendedName>
    <alternativeName>
        <fullName evidence="1">RNA polymerase subunit beta</fullName>
    </alternativeName>
    <alternativeName>
        <fullName evidence="1">Transcriptase subunit beta</fullName>
    </alternativeName>
</protein>
<keyword id="KW-0240">DNA-directed RNA polymerase</keyword>
<keyword id="KW-0548">Nucleotidyltransferase</keyword>
<keyword id="KW-0804">Transcription</keyword>
<keyword id="KW-0808">Transferase</keyword>